<name>NAGB_FUSNN</name>
<comment type="function">
    <text evidence="1">Catalyzes the reversible isomerization-deamination of glucosamine 6-phosphate (GlcN6P) to form fructose 6-phosphate (Fru6P) and ammonium ion.</text>
</comment>
<comment type="catalytic activity">
    <reaction evidence="1">
        <text>alpha-D-glucosamine 6-phosphate + H2O = beta-D-fructose 6-phosphate + NH4(+)</text>
        <dbReference type="Rhea" id="RHEA:12172"/>
        <dbReference type="ChEBI" id="CHEBI:15377"/>
        <dbReference type="ChEBI" id="CHEBI:28938"/>
        <dbReference type="ChEBI" id="CHEBI:57634"/>
        <dbReference type="ChEBI" id="CHEBI:75989"/>
        <dbReference type="EC" id="3.5.99.6"/>
    </reaction>
</comment>
<comment type="pathway">
    <text evidence="1">Amino-sugar metabolism; N-acetylneuraminate degradation; D-fructose 6-phosphate from N-acetylneuraminate: step 5/5.</text>
</comment>
<comment type="similarity">
    <text evidence="1">Belongs to the glucosamine/galactosamine-6-phosphate isomerase family. NagB subfamily.</text>
</comment>
<feature type="chain" id="PRO_0000160147" description="Glucosamine-6-phosphate deaminase">
    <location>
        <begin position="1"/>
        <end position="274"/>
    </location>
</feature>
<feature type="active site" description="Proton acceptor; for enolization step" evidence="1">
    <location>
        <position position="71"/>
    </location>
</feature>
<feature type="active site" description="For ring-opening step" evidence="1">
    <location>
        <position position="140"/>
    </location>
</feature>
<feature type="active site" description="Proton acceptor; for ring-opening step" evidence="1">
    <location>
        <position position="142"/>
    </location>
</feature>
<feature type="active site" description="For ring-opening step" evidence="1">
    <location>
        <position position="147"/>
    </location>
</feature>
<protein>
    <recommendedName>
        <fullName evidence="1">Glucosamine-6-phosphate deaminase</fullName>
        <ecNumber evidence="1">3.5.99.6</ecNumber>
    </recommendedName>
    <alternativeName>
        <fullName evidence="1">GlcN6P deaminase</fullName>
        <shortName evidence="1">GNPDA</shortName>
    </alternativeName>
    <alternativeName>
        <fullName evidence="1">Glucosamine-6-phosphate isomerase</fullName>
    </alternativeName>
</protein>
<proteinExistence type="inferred from homology"/>
<reference key="1">
    <citation type="journal article" date="2002" name="J. Bacteriol.">
        <title>Genome sequence and analysis of the oral bacterium Fusobacterium nucleatum strain ATCC 25586.</title>
        <authorList>
            <person name="Kapatral V."/>
            <person name="Anderson I."/>
            <person name="Ivanova N."/>
            <person name="Reznik G."/>
            <person name="Los T."/>
            <person name="Lykidis A."/>
            <person name="Bhattacharyya A."/>
            <person name="Bartman A."/>
            <person name="Gardner W."/>
            <person name="Grechkin G."/>
            <person name="Zhu L."/>
            <person name="Vasieva O."/>
            <person name="Chu L."/>
            <person name="Kogan Y."/>
            <person name="Chaga O."/>
            <person name="Goltsman E."/>
            <person name="Bernal A."/>
            <person name="Larsen N."/>
            <person name="D'Souza M."/>
            <person name="Walunas T."/>
            <person name="Pusch G."/>
            <person name="Haselkorn R."/>
            <person name="Fonstein M."/>
            <person name="Kyrpides N.C."/>
            <person name="Overbeek R."/>
        </authorList>
    </citation>
    <scope>NUCLEOTIDE SEQUENCE [LARGE SCALE GENOMIC DNA]</scope>
    <source>
        <strain>ATCC 25586 / DSM 15643 / BCRC 10681 / CIP 101130 / JCM 8532 / KCTC 2640 / LMG 13131 / VPI 4355</strain>
    </source>
</reference>
<sequence>MRFIVTGNKRAADWGAVYIVKKIKEFNPSPEKKFVLGLPTGSTPLQMYKRLIQFNKEGIISFKNVITFNMDEYVGLPKTHPQSYHYYMYNNFFNHIDIDKENVNILNGMAKNYKEECRKYEEKILEVGGIDLFLGGVGVDGHIAFNEPGSSFKSRTREKQLTEDTIIVNSRFFNNDITKVPQSALTVGVSTIMDAKEVLIMVEGNNKARALHMGIEEGINHMWTISALQLHEKAIIVADEDACAELKVATYKYYKDIEKKNYNIDKLIENLYKK</sequence>
<organism>
    <name type="scientific">Fusobacterium nucleatum subsp. nucleatum (strain ATCC 25586 / DSM 15643 / BCRC 10681 / CIP 101130 / JCM 8532 / KCTC 2640 / LMG 13131 / VPI 4355)</name>
    <dbReference type="NCBI Taxonomy" id="190304"/>
    <lineage>
        <taxon>Bacteria</taxon>
        <taxon>Fusobacteriati</taxon>
        <taxon>Fusobacteriota</taxon>
        <taxon>Fusobacteriia</taxon>
        <taxon>Fusobacteriales</taxon>
        <taxon>Fusobacteriaceae</taxon>
        <taxon>Fusobacterium</taxon>
    </lineage>
</organism>
<dbReference type="EC" id="3.5.99.6" evidence="1"/>
<dbReference type="EMBL" id="AE009951">
    <property type="protein sequence ID" value="AAL95339.1"/>
    <property type="molecule type" value="Genomic_DNA"/>
</dbReference>
<dbReference type="RefSeq" id="NP_604040.1">
    <property type="nucleotide sequence ID" value="NC_003454.1"/>
</dbReference>
<dbReference type="RefSeq" id="WP_011016935.1">
    <property type="nucleotide sequence ID" value="NZ_CP028101.1"/>
</dbReference>
<dbReference type="SMR" id="Q8REG1"/>
<dbReference type="FunCoup" id="Q8REG1">
    <property type="interactions" value="213"/>
</dbReference>
<dbReference type="STRING" id="190304.FN1143"/>
<dbReference type="PaxDb" id="190304-FN1143"/>
<dbReference type="EnsemblBacteria" id="AAL95339">
    <property type="protein sequence ID" value="AAL95339"/>
    <property type="gene ID" value="FN1143"/>
</dbReference>
<dbReference type="GeneID" id="79784123"/>
<dbReference type="KEGG" id="fnu:FN1143"/>
<dbReference type="PATRIC" id="fig|190304.8.peg.1708"/>
<dbReference type="eggNOG" id="COG0363">
    <property type="taxonomic scope" value="Bacteria"/>
</dbReference>
<dbReference type="HOGENOM" id="CLU_049611_0_1_0"/>
<dbReference type="InParanoid" id="Q8REG1"/>
<dbReference type="BioCyc" id="FNUC190304:G1FZS-1723-MONOMER"/>
<dbReference type="UniPathway" id="UPA00629">
    <property type="reaction ID" value="UER00684"/>
</dbReference>
<dbReference type="Proteomes" id="UP000002521">
    <property type="component" value="Chromosome"/>
</dbReference>
<dbReference type="GO" id="GO:0005737">
    <property type="term" value="C:cytoplasm"/>
    <property type="evidence" value="ECO:0000318"/>
    <property type="project" value="GO_Central"/>
</dbReference>
<dbReference type="GO" id="GO:0004342">
    <property type="term" value="F:glucosamine-6-phosphate deaminase activity"/>
    <property type="evidence" value="ECO:0000318"/>
    <property type="project" value="GO_Central"/>
</dbReference>
<dbReference type="GO" id="GO:0042802">
    <property type="term" value="F:identical protein binding"/>
    <property type="evidence" value="ECO:0000318"/>
    <property type="project" value="GO_Central"/>
</dbReference>
<dbReference type="GO" id="GO:0005975">
    <property type="term" value="P:carbohydrate metabolic process"/>
    <property type="evidence" value="ECO:0007669"/>
    <property type="project" value="InterPro"/>
</dbReference>
<dbReference type="GO" id="GO:0006043">
    <property type="term" value="P:glucosamine catabolic process"/>
    <property type="evidence" value="ECO:0000318"/>
    <property type="project" value="GO_Central"/>
</dbReference>
<dbReference type="GO" id="GO:0006046">
    <property type="term" value="P:N-acetylglucosamine catabolic process"/>
    <property type="evidence" value="ECO:0000318"/>
    <property type="project" value="GO_Central"/>
</dbReference>
<dbReference type="GO" id="GO:0019262">
    <property type="term" value="P:N-acetylneuraminate catabolic process"/>
    <property type="evidence" value="ECO:0000318"/>
    <property type="project" value="GO_Central"/>
</dbReference>
<dbReference type="CDD" id="cd01399">
    <property type="entry name" value="GlcN6P_deaminase"/>
    <property type="match status" value="1"/>
</dbReference>
<dbReference type="FunFam" id="3.40.50.1360:FF:000002">
    <property type="entry name" value="Glucosamine-6-phosphate deaminase"/>
    <property type="match status" value="1"/>
</dbReference>
<dbReference type="Gene3D" id="3.40.50.1360">
    <property type="match status" value="1"/>
</dbReference>
<dbReference type="HAMAP" id="MF_01241">
    <property type="entry name" value="GlcN6P_deamin"/>
    <property type="match status" value="1"/>
</dbReference>
<dbReference type="InterPro" id="IPR006148">
    <property type="entry name" value="Glc/Gal-6P_isomerase"/>
</dbReference>
<dbReference type="InterPro" id="IPR004547">
    <property type="entry name" value="Glucosamine6P_isomerase"/>
</dbReference>
<dbReference type="InterPro" id="IPR018321">
    <property type="entry name" value="Glucosamine6P_isomerase_CS"/>
</dbReference>
<dbReference type="InterPro" id="IPR037171">
    <property type="entry name" value="NagB/RpiA_transferase-like"/>
</dbReference>
<dbReference type="NCBIfam" id="TIGR00502">
    <property type="entry name" value="nagB"/>
    <property type="match status" value="1"/>
</dbReference>
<dbReference type="PANTHER" id="PTHR11280">
    <property type="entry name" value="GLUCOSAMINE-6-PHOSPHATE ISOMERASE"/>
    <property type="match status" value="1"/>
</dbReference>
<dbReference type="PANTHER" id="PTHR11280:SF5">
    <property type="entry name" value="GLUCOSAMINE-6-PHOSPHATE ISOMERASE"/>
    <property type="match status" value="1"/>
</dbReference>
<dbReference type="Pfam" id="PF01182">
    <property type="entry name" value="Glucosamine_iso"/>
    <property type="match status" value="1"/>
</dbReference>
<dbReference type="SUPFAM" id="SSF100950">
    <property type="entry name" value="NagB/RpiA/CoA transferase-like"/>
    <property type="match status" value="1"/>
</dbReference>
<dbReference type="PROSITE" id="PS01161">
    <property type="entry name" value="GLC_GALNAC_ISOMERASE"/>
    <property type="match status" value="1"/>
</dbReference>
<accession>Q8REG1</accession>
<gene>
    <name evidence="1" type="primary">nagB</name>
    <name type="ordered locus">FN1143</name>
</gene>
<evidence type="ECO:0000255" key="1">
    <source>
        <dbReference type="HAMAP-Rule" id="MF_01241"/>
    </source>
</evidence>
<keyword id="KW-0119">Carbohydrate metabolism</keyword>
<keyword id="KW-0378">Hydrolase</keyword>
<keyword id="KW-1185">Reference proteome</keyword>